<gene>
    <name evidence="1" type="primary">trpB</name>
    <name type="ordered locus">SPD_1597</name>
</gene>
<keyword id="KW-0028">Amino-acid biosynthesis</keyword>
<keyword id="KW-0057">Aromatic amino acid biosynthesis</keyword>
<keyword id="KW-0456">Lyase</keyword>
<keyword id="KW-0663">Pyridoxal phosphate</keyword>
<keyword id="KW-1185">Reference proteome</keyword>
<keyword id="KW-0822">Tryptophan biosynthesis</keyword>
<accession>Q04IY9</accession>
<feature type="chain" id="PRO_1000018409" description="Tryptophan synthase beta chain">
    <location>
        <begin position="1"/>
        <end position="407"/>
    </location>
</feature>
<feature type="modified residue" description="N6-(pyridoxal phosphate)lysine" evidence="1">
    <location>
        <position position="91"/>
    </location>
</feature>
<name>TRPB_STRP2</name>
<proteinExistence type="inferred from homology"/>
<evidence type="ECO:0000255" key="1">
    <source>
        <dbReference type="HAMAP-Rule" id="MF_00133"/>
    </source>
</evidence>
<dbReference type="EC" id="4.2.1.20" evidence="1"/>
<dbReference type="EMBL" id="CP000410">
    <property type="protein sequence ID" value="ABJ54918.1"/>
    <property type="molecule type" value="Genomic_DNA"/>
</dbReference>
<dbReference type="RefSeq" id="WP_000331283.1">
    <property type="nucleotide sequence ID" value="NZ_JAMLJR010000003.1"/>
</dbReference>
<dbReference type="SMR" id="Q04IY9"/>
<dbReference type="PaxDb" id="373153-SPD_1597"/>
<dbReference type="KEGG" id="spd:SPD_1597"/>
<dbReference type="eggNOG" id="COG0133">
    <property type="taxonomic scope" value="Bacteria"/>
</dbReference>
<dbReference type="HOGENOM" id="CLU_016734_3_1_9"/>
<dbReference type="BioCyc" id="SPNE373153:G1G6V-1727-MONOMER"/>
<dbReference type="UniPathway" id="UPA00035">
    <property type="reaction ID" value="UER00044"/>
</dbReference>
<dbReference type="Proteomes" id="UP000001452">
    <property type="component" value="Chromosome"/>
</dbReference>
<dbReference type="GO" id="GO:0005737">
    <property type="term" value="C:cytoplasm"/>
    <property type="evidence" value="ECO:0007669"/>
    <property type="project" value="TreeGrafter"/>
</dbReference>
<dbReference type="GO" id="GO:0004834">
    <property type="term" value="F:tryptophan synthase activity"/>
    <property type="evidence" value="ECO:0007669"/>
    <property type="project" value="UniProtKB-UniRule"/>
</dbReference>
<dbReference type="CDD" id="cd06446">
    <property type="entry name" value="Trp-synth_B"/>
    <property type="match status" value="1"/>
</dbReference>
<dbReference type="FunFam" id="3.40.50.1100:FF:000001">
    <property type="entry name" value="Tryptophan synthase beta chain"/>
    <property type="match status" value="1"/>
</dbReference>
<dbReference type="FunFam" id="3.40.50.1100:FF:000004">
    <property type="entry name" value="Tryptophan synthase beta chain"/>
    <property type="match status" value="1"/>
</dbReference>
<dbReference type="Gene3D" id="3.40.50.1100">
    <property type="match status" value="2"/>
</dbReference>
<dbReference type="HAMAP" id="MF_00133">
    <property type="entry name" value="Trp_synth_beta"/>
    <property type="match status" value="1"/>
</dbReference>
<dbReference type="InterPro" id="IPR006653">
    <property type="entry name" value="Trp_synth_b_CS"/>
</dbReference>
<dbReference type="InterPro" id="IPR006654">
    <property type="entry name" value="Trp_synth_beta"/>
</dbReference>
<dbReference type="InterPro" id="IPR023026">
    <property type="entry name" value="Trp_synth_beta/beta-like"/>
</dbReference>
<dbReference type="InterPro" id="IPR001926">
    <property type="entry name" value="TrpB-like_PALP"/>
</dbReference>
<dbReference type="InterPro" id="IPR036052">
    <property type="entry name" value="TrpB-like_PALP_sf"/>
</dbReference>
<dbReference type="NCBIfam" id="TIGR00263">
    <property type="entry name" value="trpB"/>
    <property type="match status" value="1"/>
</dbReference>
<dbReference type="PANTHER" id="PTHR48077:SF3">
    <property type="entry name" value="TRYPTOPHAN SYNTHASE"/>
    <property type="match status" value="1"/>
</dbReference>
<dbReference type="PANTHER" id="PTHR48077">
    <property type="entry name" value="TRYPTOPHAN SYNTHASE-RELATED"/>
    <property type="match status" value="1"/>
</dbReference>
<dbReference type="Pfam" id="PF00291">
    <property type="entry name" value="PALP"/>
    <property type="match status" value="1"/>
</dbReference>
<dbReference type="PIRSF" id="PIRSF001413">
    <property type="entry name" value="Trp_syn_beta"/>
    <property type="match status" value="1"/>
</dbReference>
<dbReference type="SUPFAM" id="SSF53686">
    <property type="entry name" value="Tryptophan synthase beta subunit-like PLP-dependent enzymes"/>
    <property type="match status" value="1"/>
</dbReference>
<dbReference type="PROSITE" id="PS00168">
    <property type="entry name" value="TRP_SYNTHASE_BETA"/>
    <property type="match status" value="1"/>
</dbReference>
<protein>
    <recommendedName>
        <fullName evidence="1">Tryptophan synthase beta chain</fullName>
        <ecNumber evidence="1">4.2.1.20</ecNumber>
    </recommendedName>
</protein>
<organism>
    <name type="scientific">Streptococcus pneumoniae serotype 2 (strain D39 / NCTC 7466)</name>
    <dbReference type="NCBI Taxonomy" id="373153"/>
    <lineage>
        <taxon>Bacteria</taxon>
        <taxon>Bacillati</taxon>
        <taxon>Bacillota</taxon>
        <taxon>Bacilli</taxon>
        <taxon>Lactobacillales</taxon>
        <taxon>Streptococcaceae</taxon>
        <taxon>Streptococcus</taxon>
    </lineage>
</organism>
<sequence length="407" mass="44258">MAYQEPNKDGFYGKFGGRFVPETLMTAVLELEKAYRESQADPSFQEELNQLLRQYVGRETPLYYAKNLTQHIGGAKIYLKREDLNHTGAHKINNALGQVWLAKRMGKKKIIAETGAGQHGVATATAAALFNMECIIYMGEEDVKRQALNVFRMELLGAKVEAVTDGSRVLKDAVNAALRSWVANIDDTHYILGSTLGPHPFPEIVRDFQSVIGREAKQQYRDLTGQNLPDALVACVGGGSNAIGLFHPFVEDESVAMYGAEAAGLGVDTEHHAATLTKGRPGVLHGSLMDVLQDAHGQILEAFSISAGLDYPGIGPEHSHYHDIKRASYVPVTDEEALEGFQLLSRVEGIIPALESSHAIAFAVKLAKELGPEKSMIVCLSGRGDKDVVQVKDRLEADAAKKGEAHA</sequence>
<reference key="1">
    <citation type="journal article" date="2007" name="J. Bacteriol.">
        <title>Genome sequence of Avery's virulent serotype 2 strain D39 of Streptococcus pneumoniae and comparison with that of unencapsulated laboratory strain R6.</title>
        <authorList>
            <person name="Lanie J.A."/>
            <person name="Ng W.-L."/>
            <person name="Kazmierczak K.M."/>
            <person name="Andrzejewski T.M."/>
            <person name="Davidsen T.M."/>
            <person name="Wayne K.J."/>
            <person name="Tettelin H."/>
            <person name="Glass J.I."/>
            <person name="Winkler M.E."/>
        </authorList>
    </citation>
    <scope>NUCLEOTIDE SEQUENCE [LARGE SCALE GENOMIC DNA]</scope>
    <source>
        <strain>D39 / NCTC 7466</strain>
    </source>
</reference>
<comment type="function">
    <text evidence="1">The beta subunit is responsible for the synthesis of L-tryptophan from indole and L-serine.</text>
</comment>
<comment type="catalytic activity">
    <reaction evidence="1">
        <text>(1S,2R)-1-C-(indol-3-yl)glycerol 3-phosphate + L-serine = D-glyceraldehyde 3-phosphate + L-tryptophan + H2O</text>
        <dbReference type="Rhea" id="RHEA:10532"/>
        <dbReference type="ChEBI" id="CHEBI:15377"/>
        <dbReference type="ChEBI" id="CHEBI:33384"/>
        <dbReference type="ChEBI" id="CHEBI:57912"/>
        <dbReference type="ChEBI" id="CHEBI:58866"/>
        <dbReference type="ChEBI" id="CHEBI:59776"/>
        <dbReference type="EC" id="4.2.1.20"/>
    </reaction>
</comment>
<comment type="cofactor">
    <cofactor evidence="1">
        <name>pyridoxal 5'-phosphate</name>
        <dbReference type="ChEBI" id="CHEBI:597326"/>
    </cofactor>
</comment>
<comment type="pathway">
    <text evidence="1">Amino-acid biosynthesis; L-tryptophan biosynthesis; L-tryptophan from chorismate: step 5/5.</text>
</comment>
<comment type="subunit">
    <text evidence="1">Tetramer of two alpha and two beta chains.</text>
</comment>
<comment type="similarity">
    <text evidence="1">Belongs to the TrpB family.</text>
</comment>